<keyword id="KW-0002">3D-structure</keyword>
<keyword id="KW-0488">Methylation</keyword>
<keyword id="KW-0687">Ribonucleoprotein</keyword>
<keyword id="KW-0689">Ribosomal protein</keyword>
<keyword id="KW-0694">RNA-binding</keyword>
<keyword id="KW-0699">rRNA-binding</keyword>
<proteinExistence type="evidence at protein level"/>
<dbReference type="EMBL" id="X81375">
    <property type="protein sequence ID" value="CAA57138.1"/>
    <property type="molecule type" value="Genomic_DNA"/>
</dbReference>
<dbReference type="RefSeq" id="WP_011174097.1">
    <property type="nucleotide sequence ID" value="NZ_VHHQ01000027.1"/>
</dbReference>
<dbReference type="PDB" id="2E34">
    <property type="method" value="NMR"/>
    <property type="chains" value="A=1-147"/>
</dbReference>
<dbReference type="PDB" id="2E35">
    <property type="method" value="NMR"/>
    <property type="chains" value="A=1-147"/>
</dbReference>
<dbReference type="PDB" id="2E36">
    <property type="method" value="NMR"/>
    <property type="chains" value="A=1-147"/>
</dbReference>
<dbReference type="PDB" id="2H8W">
    <property type="method" value="NMR"/>
    <property type="chains" value="A=1-147"/>
</dbReference>
<dbReference type="PDB" id="2KLM">
    <property type="method" value="Other"/>
    <property type="chains" value="A=2-147"/>
</dbReference>
<dbReference type="PDB" id="2NXN">
    <property type="method" value="X-ray"/>
    <property type="resolution" value="2.40 A"/>
    <property type="chains" value="B=1-147"/>
</dbReference>
<dbReference type="PDB" id="3CJQ">
    <property type="method" value="X-ray"/>
    <property type="resolution" value="2.70 A"/>
    <property type="chains" value="B/E/H=2-147"/>
</dbReference>
<dbReference type="PDB" id="3CJR">
    <property type="method" value="X-ray"/>
    <property type="resolution" value="2.05 A"/>
    <property type="chains" value="B=1-147"/>
</dbReference>
<dbReference type="PDB" id="3CJS">
    <property type="method" value="X-ray"/>
    <property type="resolution" value="1.37 A"/>
    <property type="chains" value="B/C=1-72"/>
</dbReference>
<dbReference type="PDB" id="3CJT">
    <property type="method" value="X-ray"/>
    <property type="resolution" value="2.30 A"/>
    <property type="chains" value="B/D/F/H/J/L/N/P=1-147"/>
</dbReference>
<dbReference type="PDB" id="4V67">
    <property type="method" value="X-ray"/>
    <property type="resolution" value="3.00 A"/>
    <property type="chains" value="BK/DK=1-147"/>
</dbReference>
<dbReference type="PDBsum" id="2E34"/>
<dbReference type="PDBsum" id="2E35"/>
<dbReference type="PDBsum" id="2E36"/>
<dbReference type="PDBsum" id="2H8W"/>
<dbReference type="PDBsum" id="2KLM"/>
<dbReference type="PDBsum" id="2NXN"/>
<dbReference type="PDBsum" id="3CJQ"/>
<dbReference type="PDBsum" id="3CJR"/>
<dbReference type="PDBsum" id="3CJS"/>
<dbReference type="PDBsum" id="3CJT"/>
<dbReference type="PDBsum" id="4V67"/>
<dbReference type="BMRB" id="P36238"/>
<dbReference type="SASBDB" id="P36238"/>
<dbReference type="SMR" id="P36238"/>
<dbReference type="DIP" id="DIP-46023N"/>
<dbReference type="IntAct" id="P36238">
    <property type="interactions" value="2"/>
</dbReference>
<dbReference type="GeneID" id="3168343"/>
<dbReference type="OMA" id="CKQFNAK"/>
<dbReference type="EvolutionaryTrace" id="P36238"/>
<dbReference type="GO" id="GO:0022625">
    <property type="term" value="C:cytosolic large ribosomal subunit"/>
    <property type="evidence" value="ECO:0007669"/>
    <property type="project" value="TreeGrafter"/>
</dbReference>
<dbReference type="GO" id="GO:0070180">
    <property type="term" value="F:large ribosomal subunit rRNA binding"/>
    <property type="evidence" value="ECO:0007669"/>
    <property type="project" value="UniProtKB-UniRule"/>
</dbReference>
<dbReference type="GO" id="GO:0003735">
    <property type="term" value="F:structural constituent of ribosome"/>
    <property type="evidence" value="ECO:0007669"/>
    <property type="project" value="InterPro"/>
</dbReference>
<dbReference type="GO" id="GO:0006412">
    <property type="term" value="P:translation"/>
    <property type="evidence" value="ECO:0007669"/>
    <property type="project" value="UniProtKB-UniRule"/>
</dbReference>
<dbReference type="CDD" id="cd00349">
    <property type="entry name" value="Ribosomal_L11"/>
    <property type="match status" value="1"/>
</dbReference>
<dbReference type="FunFam" id="1.10.10.250:FF:000001">
    <property type="entry name" value="50S ribosomal protein L11"/>
    <property type="match status" value="1"/>
</dbReference>
<dbReference type="FunFam" id="3.30.1550.10:FF:000001">
    <property type="entry name" value="50S ribosomal protein L11"/>
    <property type="match status" value="1"/>
</dbReference>
<dbReference type="Gene3D" id="1.10.10.250">
    <property type="entry name" value="Ribosomal protein L11, C-terminal domain"/>
    <property type="match status" value="1"/>
</dbReference>
<dbReference type="Gene3D" id="3.30.1550.10">
    <property type="entry name" value="Ribosomal protein L11/L12, N-terminal domain"/>
    <property type="match status" value="1"/>
</dbReference>
<dbReference type="HAMAP" id="MF_00736">
    <property type="entry name" value="Ribosomal_uL11"/>
    <property type="match status" value="1"/>
</dbReference>
<dbReference type="InterPro" id="IPR000911">
    <property type="entry name" value="Ribosomal_uL11"/>
</dbReference>
<dbReference type="InterPro" id="IPR006519">
    <property type="entry name" value="Ribosomal_uL11_bac-typ"/>
</dbReference>
<dbReference type="InterPro" id="IPR020783">
    <property type="entry name" value="Ribosomal_uL11_C"/>
</dbReference>
<dbReference type="InterPro" id="IPR036769">
    <property type="entry name" value="Ribosomal_uL11_C_sf"/>
</dbReference>
<dbReference type="InterPro" id="IPR020785">
    <property type="entry name" value="Ribosomal_uL11_CS"/>
</dbReference>
<dbReference type="InterPro" id="IPR020784">
    <property type="entry name" value="Ribosomal_uL11_N"/>
</dbReference>
<dbReference type="InterPro" id="IPR036796">
    <property type="entry name" value="Ribosomal_uL11_N_sf"/>
</dbReference>
<dbReference type="NCBIfam" id="TIGR01632">
    <property type="entry name" value="L11_bact"/>
    <property type="match status" value="1"/>
</dbReference>
<dbReference type="PANTHER" id="PTHR11661">
    <property type="entry name" value="60S RIBOSOMAL PROTEIN L12"/>
    <property type="match status" value="1"/>
</dbReference>
<dbReference type="PANTHER" id="PTHR11661:SF1">
    <property type="entry name" value="LARGE RIBOSOMAL SUBUNIT PROTEIN UL11M"/>
    <property type="match status" value="1"/>
</dbReference>
<dbReference type="Pfam" id="PF00298">
    <property type="entry name" value="Ribosomal_L11"/>
    <property type="match status" value="1"/>
</dbReference>
<dbReference type="Pfam" id="PF03946">
    <property type="entry name" value="Ribosomal_L11_N"/>
    <property type="match status" value="1"/>
</dbReference>
<dbReference type="SMART" id="SM00649">
    <property type="entry name" value="RL11"/>
    <property type="match status" value="1"/>
</dbReference>
<dbReference type="SUPFAM" id="SSF54747">
    <property type="entry name" value="Ribosomal L11/L12e N-terminal domain"/>
    <property type="match status" value="1"/>
</dbReference>
<dbReference type="SUPFAM" id="SSF46906">
    <property type="entry name" value="Ribosomal protein L11, C-terminal domain"/>
    <property type="match status" value="1"/>
</dbReference>
<dbReference type="PROSITE" id="PS00359">
    <property type="entry name" value="RIBOSOMAL_L11"/>
    <property type="match status" value="1"/>
</dbReference>
<evidence type="ECO:0000255" key="1">
    <source>
        <dbReference type="HAMAP-Rule" id="MF_00736"/>
    </source>
</evidence>
<evidence type="ECO:0000305" key="2"/>
<evidence type="ECO:0007829" key="3">
    <source>
        <dbReference type="PDB" id="2E34"/>
    </source>
</evidence>
<evidence type="ECO:0007829" key="4">
    <source>
        <dbReference type="PDB" id="2H8W"/>
    </source>
</evidence>
<evidence type="ECO:0007829" key="5">
    <source>
        <dbReference type="PDB" id="2NXN"/>
    </source>
</evidence>
<evidence type="ECO:0007829" key="6">
    <source>
        <dbReference type="PDB" id="3CJR"/>
    </source>
</evidence>
<evidence type="ECO:0007829" key="7">
    <source>
        <dbReference type="PDB" id="3CJS"/>
    </source>
</evidence>
<organism>
    <name type="scientific">Thermus thermophilus</name>
    <dbReference type="NCBI Taxonomy" id="274"/>
    <lineage>
        <taxon>Bacteria</taxon>
        <taxon>Thermotogati</taxon>
        <taxon>Deinococcota</taxon>
        <taxon>Deinococci</taxon>
        <taxon>Thermales</taxon>
        <taxon>Thermaceae</taxon>
        <taxon>Thermus</taxon>
    </lineage>
</organism>
<reference key="1">
    <citation type="submission" date="1994-09" db="EMBL/GenBank/DDBJ databases">
        <title>Cloning and overexpression of the ribosomal protein L1 gene from Thermus thermophilus VK1. Crystallization of the recombinant protein L1.</title>
        <authorList>
            <person name="Ossina N."/>
            <person name="Eliseikina I."/>
            <person name="Garber M.B."/>
            <person name="Jonsson B.-H."/>
        </authorList>
    </citation>
    <scope>NUCLEOTIDE SEQUENCE [GENOMIC DNA]</scope>
    <source>
        <strain>VK1</strain>
    </source>
</reference>
<comment type="function">
    <text evidence="1">Forms part of the ribosomal stalk which helps the ribosome interact with GTP-bound translation factors.</text>
</comment>
<comment type="subunit">
    <text evidence="1">Part of the ribosomal stalk of the 50S ribosomal subunit. Interacts with L10 and the large rRNA to form the base of the stalk. L10 forms an elongated spine to which L12 dimers bind in a sequential fashion forming a multimeric L10(L12)X complex.</text>
</comment>
<comment type="interaction">
    <interactant intactId="EBI-15714407">
        <id>P36238</id>
    </interactant>
    <interactant intactId="EBI-7202232">
        <id>Q84BQ9</id>
        <label>prmA</label>
    </interactant>
    <organismsDiffer>true</organismsDiffer>
    <experiments>2</experiments>
</comment>
<comment type="PTM">
    <text evidence="1">One or more lysine residues are methylated.</text>
</comment>
<comment type="similarity">
    <text evidence="1">Belongs to the universal ribosomal protein uL11 family.</text>
</comment>
<protein>
    <recommendedName>
        <fullName evidence="1">Large ribosomal subunit protein uL11</fullName>
    </recommendedName>
    <alternativeName>
        <fullName evidence="2">50S ribosomal protein L11</fullName>
    </alternativeName>
</protein>
<gene>
    <name evidence="1" type="primary">rplK</name>
    <name evidence="1" type="synonym">rpl11</name>
</gene>
<name>RL11_THETH</name>
<sequence>MKKVVAVVKLQLPAGKATPAPPVGPALGQHGANIMEFVKAFNAATANMGDAIVPVEITIYADRSFTFVTKTPPASYLIRKAAGLEKGAHKPGREKVGRITWEQVLEIAKQKMPDLNTTDLEAAARMIAGSARSMGVEVVGAPEVKDA</sequence>
<accession>P36238</accession>
<feature type="chain" id="PRO_0000104400" description="Large ribosomal subunit protein uL11">
    <location>
        <begin position="1"/>
        <end position="147"/>
    </location>
</feature>
<feature type="strand" evidence="7">
    <location>
        <begin position="4"/>
        <end position="13"/>
    </location>
</feature>
<feature type="turn" evidence="5">
    <location>
        <begin position="20"/>
        <end position="22"/>
    </location>
</feature>
<feature type="helix" evidence="7">
    <location>
        <begin position="23"/>
        <end position="28"/>
    </location>
</feature>
<feature type="turn" evidence="7">
    <location>
        <begin position="29"/>
        <end position="31"/>
    </location>
</feature>
<feature type="helix" evidence="7">
    <location>
        <begin position="34"/>
        <end position="45"/>
    </location>
</feature>
<feature type="helix" evidence="7">
    <location>
        <begin position="46"/>
        <end position="48"/>
    </location>
</feature>
<feature type="strand" evidence="7">
    <location>
        <begin position="52"/>
        <end position="60"/>
    </location>
</feature>
<feature type="turn" evidence="3">
    <location>
        <begin position="61"/>
        <end position="63"/>
    </location>
</feature>
<feature type="strand" evidence="7">
    <location>
        <begin position="65"/>
        <end position="69"/>
    </location>
</feature>
<feature type="helix" evidence="6">
    <location>
        <begin position="74"/>
        <end position="78"/>
    </location>
</feature>
<feature type="strand" evidence="4">
    <location>
        <begin position="91"/>
        <end position="94"/>
    </location>
</feature>
<feature type="strand" evidence="3">
    <location>
        <begin position="96"/>
        <end position="99"/>
    </location>
</feature>
<feature type="helix" evidence="6">
    <location>
        <begin position="103"/>
        <end position="105"/>
    </location>
</feature>
<feature type="helix" evidence="6">
    <location>
        <begin position="107"/>
        <end position="110"/>
    </location>
</feature>
<feature type="turn" evidence="6">
    <location>
        <begin position="112"/>
        <end position="114"/>
    </location>
</feature>
<feature type="strand" evidence="5">
    <location>
        <begin position="118"/>
        <end position="120"/>
    </location>
</feature>
<feature type="helix" evidence="6">
    <location>
        <begin position="124"/>
        <end position="132"/>
    </location>
</feature>
<feature type="turn" evidence="6">
    <location>
        <begin position="133"/>
        <end position="135"/>
    </location>
</feature>
<feature type="strand" evidence="3">
    <location>
        <begin position="137"/>
        <end position="139"/>
    </location>
</feature>